<keyword id="KW-0002">3D-structure</keyword>
<keyword id="KW-0150">Chloroplast</keyword>
<keyword id="KW-0175">Coiled coil</keyword>
<keyword id="KW-0903">Direct protein sequencing</keyword>
<keyword id="KW-1015">Disulfide bond</keyword>
<keyword id="KW-0472">Membrane</keyword>
<keyword id="KW-0560">Oxidoreductase</keyword>
<keyword id="KW-0934">Plastid</keyword>
<keyword id="KW-1185">Reference proteome</keyword>
<keyword id="KW-0793">Thylakoid</keyword>
<keyword id="KW-0809">Transit peptide</keyword>
<sequence>MAVATHCFTSPCHDRIRFFSSDDGIGRLGITRKRINGTFLLKILPPIQSADLRTTGGRSSRPLSAFRSGFSKGIFDIVPLPSKNELKELTAPLLLKLVGVLACAFLIVPSADAVDALKTCACLLKGCRIELAKCIANPACAANVACLQTCNNRPDETECQIKCGDLFENSVVDEFNECAVSRKKCVPRKSDLGEFPAPDPSVLVQNFNISDFNGKWYITSGLNPTFDAFDCQLHEFHTEGDNKLVGNISWRIKTLDSGFFTRSAVQKFVQDPNQPGVLYNHDNEYLHYQDDWYILSSKIENKPEDYIFVYYRGRNDAWDGYGGAVVYTRSSVLPNSIIPELEKAAKSIGRDFSTFIRTDNTCGPEPALVERIEKTVEEGERIIVKEVEEIEEEVEKEVEKVGRTEMTLFQRLAEGFNELKQDEENFVRELSKEEMEFLDEIKMEASEVEKLFGKALPIRKVR</sequence>
<proteinExistence type="evidence at protein level"/>
<protein>
    <recommendedName>
        <fullName evidence="11">Violaxanthin de-epoxidase, chloroplastic</fullName>
        <shortName>AtVxDE</shortName>
        <ecNumber evidence="12">1.23.5.1</ecNumber>
    </recommendedName>
    <alternativeName>
        <fullName>Protein NON-PHOTOCHEMICAL QUENCHING 1</fullName>
    </alternativeName>
</protein>
<name>VDE_ARATH</name>
<reference key="1">
    <citation type="journal article" date="1998" name="J. Biol. Chem.">
        <title>Xanthophyll cycle enzymes are members of the lipocalin family, the first identified from plants.</title>
        <authorList>
            <person name="Bugos R.C."/>
            <person name="Hieber A.D."/>
            <person name="Yamamoto H.Y."/>
        </authorList>
    </citation>
    <scope>NUCLEOTIDE SEQUENCE [MRNA]</scope>
    <source>
        <strain>cv. Columbia</strain>
    </source>
</reference>
<reference key="2">
    <citation type="journal article" date="2000" name="Nature">
        <title>Sequence and analysis of chromosome 1 of the plant Arabidopsis thaliana.</title>
        <authorList>
            <person name="Theologis A."/>
            <person name="Ecker J.R."/>
            <person name="Palm C.J."/>
            <person name="Federspiel N.A."/>
            <person name="Kaul S."/>
            <person name="White O."/>
            <person name="Alonso J."/>
            <person name="Altafi H."/>
            <person name="Araujo R."/>
            <person name="Bowman C.L."/>
            <person name="Brooks S.Y."/>
            <person name="Buehler E."/>
            <person name="Chan A."/>
            <person name="Chao Q."/>
            <person name="Chen H."/>
            <person name="Cheuk R.F."/>
            <person name="Chin C.W."/>
            <person name="Chung M.K."/>
            <person name="Conn L."/>
            <person name="Conway A.B."/>
            <person name="Conway A.R."/>
            <person name="Creasy T.H."/>
            <person name="Dewar K."/>
            <person name="Dunn P."/>
            <person name="Etgu P."/>
            <person name="Feldblyum T.V."/>
            <person name="Feng J.-D."/>
            <person name="Fong B."/>
            <person name="Fujii C.Y."/>
            <person name="Gill J.E."/>
            <person name="Goldsmith A.D."/>
            <person name="Haas B."/>
            <person name="Hansen N.F."/>
            <person name="Hughes B."/>
            <person name="Huizar L."/>
            <person name="Hunter J.L."/>
            <person name="Jenkins J."/>
            <person name="Johnson-Hopson C."/>
            <person name="Khan S."/>
            <person name="Khaykin E."/>
            <person name="Kim C.J."/>
            <person name="Koo H.L."/>
            <person name="Kremenetskaia I."/>
            <person name="Kurtz D.B."/>
            <person name="Kwan A."/>
            <person name="Lam B."/>
            <person name="Langin-Hooper S."/>
            <person name="Lee A."/>
            <person name="Lee J.M."/>
            <person name="Lenz C.A."/>
            <person name="Li J.H."/>
            <person name="Li Y.-P."/>
            <person name="Lin X."/>
            <person name="Liu S.X."/>
            <person name="Liu Z.A."/>
            <person name="Luros J.S."/>
            <person name="Maiti R."/>
            <person name="Marziali A."/>
            <person name="Militscher J."/>
            <person name="Miranda M."/>
            <person name="Nguyen M."/>
            <person name="Nierman W.C."/>
            <person name="Osborne B.I."/>
            <person name="Pai G."/>
            <person name="Peterson J."/>
            <person name="Pham P.K."/>
            <person name="Rizzo M."/>
            <person name="Rooney T."/>
            <person name="Rowley D."/>
            <person name="Sakano H."/>
            <person name="Salzberg S.L."/>
            <person name="Schwartz J.R."/>
            <person name="Shinn P."/>
            <person name="Southwick A.M."/>
            <person name="Sun H."/>
            <person name="Tallon L.J."/>
            <person name="Tambunga G."/>
            <person name="Toriumi M.J."/>
            <person name="Town C.D."/>
            <person name="Utterback T."/>
            <person name="Van Aken S."/>
            <person name="Vaysberg M."/>
            <person name="Vysotskaia V.S."/>
            <person name="Walker M."/>
            <person name="Wu D."/>
            <person name="Yu G."/>
            <person name="Fraser C.M."/>
            <person name="Venter J.C."/>
            <person name="Davis R.W."/>
        </authorList>
    </citation>
    <scope>NUCLEOTIDE SEQUENCE [LARGE SCALE GENOMIC DNA]</scope>
    <source>
        <strain>cv. Columbia</strain>
    </source>
</reference>
<reference key="3">
    <citation type="journal article" date="2017" name="Plant J.">
        <title>Araport11: a complete reannotation of the Arabidopsis thaliana reference genome.</title>
        <authorList>
            <person name="Cheng C.Y."/>
            <person name="Krishnakumar V."/>
            <person name="Chan A.P."/>
            <person name="Thibaud-Nissen F."/>
            <person name="Schobel S."/>
            <person name="Town C.D."/>
        </authorList>
    </citation>
    <scope>GENOME REANNOTATION</scope>
    <source>
        <strain>cv. Columbia</strain>
    </source>
</reference>
<reference key="4">
    <citation type="journal article" date="2003" name="Science">
        <title>Empirical analysis of transcriptional activity in the Arabidopsis genome.</title>
        <authorList>
            <person name="Yamada K."/>
            <person name="Lim J."/>
            <person name="Dale J.M."/>
            <person name="Chen H."/>
            <person name="Shinn P."/>
            <person name="Palm C.J."/>
            <person name="Southwick A.M."/>
            <person name="Wu H.C."/>
            <person name="Kim C.J."/>
            <person name="Nguyen M."/>
            <person name="Pham P.K."/>
            <person name="Cheuk R.F."/>
            <person name="Karlin-Newmann G."/>
            <person name="Liu S.X."/>
            <person name="Lam B."/>
            <person name="Sakano H."/>
            <person name="Wu T."/>
            <person name="Yu G."/>
            <person name="Miranda M."/>
            <person name="Quach H.L."/>
            <person name="Tripp M."/>
            <person name="Chang C.H."/>
            <person name="Lee J.M."/>
            <person name="Toriumi M.J."/>
            <person name="Chan M.M."/>
            <person name="Tang C.C."/>
            <person name="Onodera C.S."/>
            <person name="Deng J.M."/>
            <person name="Akiyama K."/>
            <person name="Ansari Y."/>
            <person name="Arakawa T."/>
            <person name="Banh J."/>
            <person name="Banno F."/>
            <person name="Bowser L."/>
            <person name="Brooks S.Y."/>
            <person name="Carninci P."/>
            <person name="Chao Q."/>
            <person name="Choy N."/>
            <person name="Enju A."/>
            <person name="Goldsmith A.D."/>
            <person name="Gurjal M."/>
            <person name="Hansen N.F."/>
            <person name="Hayashizaki Y."/>
            <person name="Johnson-Hopson C."/>
            <person name="Hsuan V.W."/>
            <person name="Iida K."/>
            <person name="Karnes M."/>
            <person name="Khan S."/>
            <person name="Koesema E."/>
            <person name="Ishida J."/>
            <person name="Jiang P.X."/>
            <person name="Jones T."/>
            <person name="Kawai J."/>
            <person name="Kamiya A."/>
            <person name="Meyers C."/>
            <person name="Nakajima M."/>
            <person name="Narusaka M."/>
            <person name="Seki M."/>
            <person name="Sakurai T."/>
            <person name="Satou M."/>
            <person name="Tamse R."/>
            <person name="Vaysberg M."/>
            <person name="Wallender E.K."/>
            <person name="Wong C."/>
            <person name="Yamamura Y."/>
            <person name="Yuan S."/>
            <person name="Shinozaki K."/>
            <person name="Davis R.W."/>
            <person name="Theologis A."/>
            <person name="Ecker J.R."/>
        </authorList>
    </citation>
    <scope>NUCLEOTIDE SEQUENCE [LARGE SCALE MRNA]</scope>
    <source>
        <strain>cv. Columbia</strain>
    </source>
</reference>
<reference key="5">
    <citation type="journal article" date="2002" name="J. Biol. Chem.">
        <title>Proteome map of the chloroplast lumen of Arabidopsis thaliana.</title>
        <authorList>
            <person name="Schubert M."/>
            <person name="Petersson U.A."/>
            <person name="Haas B.J."/>
            <person name="Funk C."/>
            <person name="Schroeder W.P."/>
            <person name="Kieselbach T."/>
        </authorList>
    </citation>
    <scope>PROTEIN SEQUENCE OF 114-143</scope>
    <scope>SUBCELLULAR LOCATION</scope>
</reference>
<reference key="6">
    <citation type="journal article" date="1998" name="Plant Cell">
        <title>Arabidopsis mutants define a central role for the xanthophyll cycle in the regulation of photosynthetic energy conversion.</title>
        <authorList>
            <person name="Niyogi K.K."/>
            <person name="Grossman A.R."/>
            <person name="Bjoerkman O."/>
        </authorList>
    </citation>
    <scope>MUTAGENESIS OF CYS-185</scope>
    <scope>FUNCTION</scope>
    <source>
        <strain>cv. Columbia</strain>
    </source>
</reference>
<reference key="7">
    <citation type="journal article" date="2000" name="Plant Physiol.">
        <title>Photodamage of the photosynthetic apparatus and its dependence on the leaf developmental stage in the npq1 Arabidopsis mutant deficient in the xanthophyll cycle enzyme violaxanthin de-epoxidase.</title>
        <authorList>
            <person name="Havaux M."/>
            <person name="Bonfils J.-P."/>
            <person name="Luetz C."/>
            <person name="Niyogi K.K."/>
        </authorList>
    </citation>
    <scope>FUNCTION</scope>
</reference>
<reference key="8">
    <citation type="journal article" date="2002" name="Planta">
        <title>Overexpression of violaxanthin de-epoxidase: properties of C-terminal deletions on activity and pH-dependent lipid binding.</title>
        <authorList>
            <person name="Hieber A.D."/>
            <person name="Bugos R.C."/>
            <person name="Verhoeven A.S."/>
            <person name="Yamamoto H.Y."/>
        </authorList>
    </citation>
    <scope>DOMAIN</scope>
    <scope>FUNCTION</scope>
</reference>
<reference key="9">
    <citation type="journal article" date="2002" name="Plant Physiol.">
        <title>Ascorbate deficiency can limit violaxanthin de-epoxidase activity in vivo.</title>
        <authorList>
            <person name="Mueller-Moule P."/>
            <person name="Conklin P.L."/>
            <person name="Niyogi K.K."/>
        </authorList>
    </citation>
    <scope>ACTIVITY REGULATION</scope>
</reference>
<reference key="10">
    <citation type="journal article" date="2004" name="Plant Cell Physiol.">
        <title>Significance of the lipid phase in the dynamics and functions of the xanthophyll cycle as revealed by PsbS overexpression in tobacco and in-vitro de-epoxidation in monogalactosyldiacylglycerol micelles.</title>
        <authorList>
            <person name="Hieber A.D."/>
            <person name="Kawabata O."/>
            <person name="Yamamoto H.Y."/>
        </authorList>
    </citation>
    <scope>ACTIVITY REGULATION</scope>
</reference>
<reference key="11">
    <citation type="journal article" date="2006" name="Planta">
        <title>Functional roles of the major chloroplast lipids in the violaxanthin cycle.</title>
        <authorList>
            <person name="Yamamoto H.Y."/>
        </authorList>
    </citation>
    <scope>ACTIVITY REGULATION</scope>
</reference>
<reference key="12">
    <citation type="journal article" date="2010" name="Proteomics">
        <title>Thioredoxin targets of the plant chloroplast lumen and their implications for plastid function.</title>
        <authorList>
            <person name="Hall M."/>
            <person name="Mata-Cabana A."/>
            <person name="Akerlund H.E."/>
            <person name="Florencio F.J."/>
            <person name="Schroeder W.P."/>
            <person name="Lindahl M."/>
            <person name="Kieselbach T."/>
        </authorList>
    </citation>
    <scope>ACTIVITY REGULATION</scope>
</reference>
<reference key="13">
    <citation type="journal article" date="2014" name="Protein Pept. Lett.">
        <title>Identification of potential targets for thylakoid oxidoreductase AtVKOR/LTO1 in chloroplasts.</title>
        <authorList>
            <person name="Lu Y."/>
            <person name="Du J.J."/>
            <person name="Yu Z.B."/>
            <person name="Peng J.J."/>
            <person name="Xu J.N."/>
            <person name="Wang X.Y."/>
        </authorList>
    </citation>
    <scope>INTERACTION WITH LTO1</scope>
</reference>
<reference key="14">
    <citation type="journal article" date="2009" name="Plant Cell">
        <title>A structural basis for the pH-dependent xanthophyll cycle in Arabidopsis thaliana.</title>
        <authorList>
            <person name="Arnoux P."/>
            <person name="Morosinotto T."/>
            <person name="Saga G."/>
            <person name="Bassi R."/>
            <person name="Pignol D."/>
        </authorList>
    </citation>
    <scope>X-RAY CRYSTALLOGRAPHY (2.00 ANGSTROMS) OF 191-366</scope>
    <scope>DISULFIDE BOND</scope>
</reference>
<organism>
    <name type="scientific">Arabidopsis thaliana</name>
    <name type="common">Mouse-ear cress</name>
    <dbReference type="NCBI Taxonomy" id="3702"/>
    <lineage>
        <taxon>Eukaryota</taxon>
        <taxon>Viridiplantae</taxon>
        <taxon>Streptophyta</taxon>
        <taxon>Embryophyta</taxon>
        <taxon>Tracheophyta</taxon>
        <taxon>Spermatophyta</taxon>
        <taxon>Magnoliopsida</taxon>
        <taxon>eudicotyledons</taxon>
        <taxon>Gunneridae</taxon>
        <taxon>Pentapetalae</taxon>
        <taxon>rosids</taxon>
        <taxon>malvids</taxon>
        <taxon>Brassicales</taxon>
        <taxon>Brassicaceae</taxon>
        <taxon>Camelineae</taxon>
        <taxon>Arabidopsis</taxon>
    </lineage>
</organism>
<gene>
    <name evidence="11" type="primary">VDE1</name>
    <name type="synonym">AVDE1</name>
    <name type="synonym">NPQ1</name>
    <name type="synonym">VXDE</name>
    <name evidence="13" type="ordered locus">At1g08550</name>
    <name evidence="15" type="ORF">F22O13.3</name>
    <name evidence="14" type="ORF">T27G7.23</name>
</gene>
<dbReference type="EC" id="1.23.5.1" evidence="12"/>
<dbReference type="EMBL" id="U44133">
    <property type="protein sequence ID" value="AAC50032.1"/>
    <property type="molecule type" value="mRNA"/>
</dbReference>
<dbReference type="EMBL" id="AC003981">
    <property type="protein sequence ID" value="AAF99753.1"/>
    <property type="molecule type" value="Genomic_DNA"/>
</dbReference>
<dbReference type="EMBL" id="AC006932">
    <property type="protein sequence ID" value="AAF22898.1"/>
    <property type="molecule type" value="Genomic_DNA"/>
</dbReference>
<dbReference type="EMBL" id="CP002684">
    <property type="protein sequence ID" value="AEE28304.1"/>
    <property type="molecule type" value="Genomic_DNA"/>
</dbReference>
<dbReference type="EMBL" id="CP002684">
    <property type="protein sequence ID" value="AEE28305.1"/>
    <property type="molecule type" value="Genomic_DNA"/>
</dbReference>
<dbReference type="EMBL" id="CP002684">
    <property type="protein sequence ID" value="ANM58901.1"/>
    <property type="molecule type" value="Genomic_DNA"/>
</dbReference>
<dbReference type="EMBL" id="AY063067">
    <property type="protein sequence ID" value="AAL34241.1"/>
    <property type="molecule type" value="mRNA"/>
</dbReference>
<dbReference type="EMBL" id="AF370251">
    <property type="protein sequence ID" value="AAK44066.1"/>
    <property type="molecule type" value="mRNA"/>
</dbReference>
<dbReference type="PIR" id="T00708">
    <property type="entry name" value="T00708"/>
</dbReference>
<dbReference type="RefSeq" id="NP_001031000.1">
    <property type="nucleotide sequence ID" value="NM_001035923.3"/>
</dbReference>
<dbReference type="RefSeq" id="NP_001321301.1">
    <property type="nucleotide sequence ID" value="NM_001331777.1"/>
</dbReference>
<dbReference type="RefSeq" id="NP_172331.1">
    <property type="nucleotide sequence ID" value="NM_100728.4"/>
</dbReference>
<dbReference type="PDB" id="3CQN">
    <property type="method" value="X-ray"/>
    <property type="resolution" value="2.00 A"/>
    <property type="chains" value="A/B=191-366"/>
</dbReference>
<dbReference type="PDB" id="3CQR">
    <property type="method" value="X-ray"/>
    <property type="resolution" value="2.00 A"/>
    <property type="chains" value="A/B=191-366"/>
</dbReference>
<dbReference type="PDBsum" id="3CQN"/>
<dbReference type="PDBsum" id="3CQR"/>
<dbReference type="SMR" id="Q39249"/>
<dbReference type="BioGRID" id="22618">
    <property type="interactions" value="2"/>
</dbReference>
<dbReference type="FunCoup" id="Q39249">
    <property type="interactions" value="1090"/>
</dbReference>
<dbReference type="IntAct" id="Q39249">
    <property type="interactions" value="2"/>
</dbReference>
<dbReference type="STRING" id="3702.Q39249"/>
<dbReference type="iPTMnet" id="Q39249"/>
<dbReference type="PaxDb" id="3702-AT1G08550.1"/>
<dbReference type="ProteomicsDB" id="243228"/>
<dbReference type="EnsemblPlants" id="AT1G08550.1">
    <property type="protein sequence ID" value="AT1G08550.1"/>
    <property type="gene ID" value="AT1G08550"/>
</dbReference>
<dbReference type="EnsemblPlants" id="AT1G08550.2">
    <property type="protein sequence ID" value="AT1G08550.2"/>
    <property type="gene ID" value="AT1G08550"/>
</dbReference>
<dbReference type="EnsemblPlants" id="AT1G08550.3">
    <property type="protein sequence ID" value="AT1G08550.3"/>
    <property type="gene ID" value="AT1G08550"/>
</dbReference>
<dbReference type="GeneID" id="837377"/>
<dbReference type="Gramene" id="AT1G08550.1">
    <property type="protein sequence ID" value="AT1G08550.1"/>
    <property type="gene ID" value="AT1G08550"/>
</dbReference>
<dbReference type="Gramene" id="AT1G08550.2">
    <property type="protein sequence ID" value="AT1G08550.2"/>
    <property type="gene ID" value="AT1G08550"/>
</dbReference>
<dbReference type="Gramene" id="AT1G08550.3">
    <property type="protein sequence ID" value="AT1G08550.3"/>
    <property type="gene ID" value="AT1G08550"/>
</dbReference>
<dbReference type="KEGG" id="ath:AT1G08550"/>
<dbReference type="Araport" id="AT1G08550"/>
<dbReference type="TAIR" id="AT1G08550">
    <property type="gene designation" value="NPQ1"/>
</dbReference>
<dbReference type="eggNOG" id="ENOG502QSFY">
    <property type="taxonomic scope" value="Eukaryota"/>
</dbReference>
<dbReference type="HOGENOM" id="CLU_038426_1_0_1"/>
<dbReference type="InParanoid" id="Q39249"/>
<dbReference type="OMA" id="CLLRECR"/>
<dbReference type="PhylomeDB" id="Q39249"/>
<dbReference type="BioCyc" id="ARA:AT1G08550-MONOMER"/>
<dbReference type="BioCyc" id="MetaCyc:AT1G08550-MONOMER"/>
<dbReference type="BRENDA" id="1.23.5.1">
    <property type="organism ID" value="399"/>
</dbReference>
<dbReference type="EvolutionaryTrace" id="Q39249"/>
<dbReference type="PRO" id="PR:Q39249"/>
<dbReference type="Proteomes" id="UP000006548">
    <property type="component" value="Chromosome 1"/>
</dbReference>
<dbReference type="ExpressionAtlas" id="Q39249">
    <property type="expression patterns" value="baseline and differential"/>
</dbReference>
<dbReference type="GO" id="GO:0009507">
    <property type="term" value="C:chloroplast"/>
    <property type="evidence" value="ECO:0007005"/>
    <property type="project" value="TAIR"/>
</dbReference>
<dbReference type="GO" id="GO:0009534">
    <property type="term" value="C:chloroplast thylakoid"/>
    <property type="evidence" value="ECO:0007005"/>
    <property type="project" value="TAIR"/>
</dbReference>
<dbReference type="GO" id="GO:0009535">
    <property type="term" value="C:chloroplast thylakoid membrane"/>
    <property type="evidence" value="ECO:0007669"/>
    <property type="project" value="UniProtKB-SubCell"/>
</dbReference>
<dbReference type="GO" id="GO:0005829">
    <property type="term" value="C:cytosol"/>
    <property type="evidence" value="ECO:0007005"/>
    <property type="project" value="TAIR"/>
</dbReference>
<dbReference type="GO" id="GO:0005576">
    <property type="term" value="C:extracellular region"/>
    <property type="evidence" value="ECO:0007005"/>
    <property type="project" value="TAIR"/>
</dbReference>
<dbReference type="GO" id="GO:0031977">
    <property type="term" value="C:thylakoid lumen"/>
    <property type="evidence" value="ECO:0007005"/>
    <property type="project" value="TAIR"/>
</dbReference>
<dbReference type="GO" id="GO:0019904">
    <property type="term" value="F:protein domain specific binding"/>
    <property type="evidence" value="ECO:0000353"/>
    <property type="project" value="CAFA"/>
</dbReference>
<dbReference type="GO" id="GO:0046422">
    <property type="term" value="F:violaxanthin de-epoxidase activity"/>
    <property type="evidence" value="ECO:0000315"/>
    <property type="project" value="TAIR"/>
</dbReference>
<dbReference type="GO" id="GO:0015994">
    <property type="term" value="P:chlorophyll metabolic process"/>
    <property type="evidence" value="ECO:0000316"/>
    <property type="project" value="TAIR"/>
</dbReference>
<dbReference type="GO" id="GO:0006631">
    <property type="term" value="P:fatty acid metabolic process"/>
    <property type="evidence" value="ECO:0000316"/>
    <property type="project" value="TAIR"/>
</dbReference>
<dbReference type="GO" id="GO:0009408">
    <property type="term" value="P:response to heat"/>
    <property type="evidence" value="ECO:0000315"/>
    <property type="project" value="TAIR"/>
</dbReference>
<dbReference type="GO" id="GO:0010028">
    <property type="term" value="P:xanthophyll cycle"/>
    <property type="evidence" value="ECO:0000315"/>
    <property type="project" value="TAIR"/>
</dbReference>
<dbReference type="CDD" id="cd19420">
    <property type="entry name" value="lipocalin_VDE"/>
    <property type="match status" value="1"/>
</dbReference>
<dbReference type="FunFam" id="2.40.128.20:FF:000028">
    <property type="entry name" value="Violaxanthin de-epoxidase, chloroplastic"/>
    <property type="match status" value="1"/>
</dbReference>
<dbReference type="Gene3D" id="2.40.128.20">
    <property type="match status" value="1"/>
</dbReference>
<dbReference type="InterPro" id="IPR012674">
    <property type="entry name" value="Calycin"/>
</dbReference>
<dbReference type="InterPro" id="IPR022272">
    <property type="entry name" value="Lipocalin_CS"/>
</dbReference>
<dbReference type="InterPro" id="IPR044682">
    <property type="entry name" value="VDE"/>
</dbReference>
<dbReference type="InterPro" id="IPR010788">
    <property type="entry name" value="VDE_dom"/>
</dbReference>
<dbReference type="PANTHER" id="PTHR33970:SF1">
    <property type="entry name" value="VIOLAXANTHIN DE-EPOXIDASE, CHLOROPLASTIC"/>
    <property type="match status" value="1"/>
</dbReference>
<dbReference type="PANTHER" id="PTHR33970">
    <property type="entry name" value="VIOLAXANTHIN DE-EPOXIDASE, CHLOROPLASTIC-RELATED"/>
    <property type="match status" value="1"/>
</dbReference>
<dbReference type="Pfam" id="PF07137">
    <property type="entry name" value="VDE"/>
    <property type="match status" value="1"/>
</dbReference>
<dbReference type="SUPFAM" id="SSF50814">
    <property type="entry name" value="Lipocalins"/>
    <property type="match status" value="1"/>
</dbReference>
<dbReference type="PROSITE" id="PS00213">
    <property type="entry name" value="LIPOCALIN"/>
    <property type="match status" value="1"/>
</dbReference>
<comment type="function">
    <text evidence="2 4 10">Part of the xanthophyll (or violaxanthin) cycle for controlling the concentration of zeaxanthin in chloroplasts. Catalyzes the two-step mono de-epoxidation reaction. Stereospecific for all-trans xanthophylls. Zeaxanthin induces the dissipation of excitation energy in the chlorophyll of the light-harvesting protein complex of photosystem II.</text>
</comment>
<comment type="catalytic activity">
    <reaction evidence="12">
        <text>all-trans-violaxanthin + 2 L-ascorbate = all-trans-zeaxanthin + 2 L-dehydroascorbate + 2 H2O</text>
        <dbReference type="Rhea" id="RHEA:32371"/>
        <dbReference type="ChEBI" id="CHEBI:15377"/>
        <dbReference type="ChEBI" id="CHEBI:27547"/>
        <dbReference type="ChEBI" id="CHEBI:35288"/>
        <dbReference type="ChEBI" id="CHEBI:38290"/>
        <dbReference type="ChEBI" id="CHEBI:58539"/>
        <dbReference type="EC" id="1.23.5.1"/>
    </reaction>
</comment>
<comment type="activity regulation">
    <text evidence="5 6 7 8">Activity limited by low ascorbate availability. Feedback inhibition by zeaxanthin. Requires the presence of micelle-forming lipids such as monogalactosyldiacylglyceride (MGDG). Low concentration of bilayer forming lipids, such as digalactosyldiacylglyceride (DGDG) or phosphatidylcholine, supports a slower but nearly complete activity (PubMed:11891252, PubMed:14749490, PubMed:16532316). 80% of the specific activity in lumenal chloroplast fractions is lost in vitro in the presence of reduced thioredoxin (PubMed:20049866).</text>
</comment>
<comment type="subunit">
    <text evidence="9">Interacts in vitro with LTO1.</text>
</comment>
<comment type="interaction">
    <interactant intactId="EBI-2895666">
        <id>Q39249</id>
    </interactant>
    <interactant intactId="EBI-368542">
        <id>P0AA25</id>
        <label>trxA</label>
    </interactant>
    <organismsDiffer>true</organismsDiffer>
    <experiments>2</experiments>
</comment>
<comment type="subcellular location">
    <subcellularLocation>
        <location evidence="3">Plastid</location>
        <location evidence="3">Chloroplast thylakoid membrane</location>
        <topology evidence="3">Peripheral membrane protein</topology>
        <orientation evidence="3">Lumenal side</orientation>
    </subcellularLocation>
</comment>
<comment type="domain">
    <text evidence="4">The cysteine rich N-terminal region is required for activity.</text>
</comment>
<comment type="miscellaneous">
    <text>The amount of VDE in vivo is estimated to be 1 molecule per 20-100 electron transport chains.</text>
</comment>
<comment type="similarity">
    <text evidence="12">Belongs to the calycin superfamily. Lipocalin family.</text>
</comment>
<feature type="transit peptide" description="Chloroplast" evidence="1">
    <location>
        <begin position="1"/>
        <end status="unknown"/>
    </location>
</feature>
<feature type="transit peptide" description="Thylakoid" evidence="3">
    <location>
        <begin status="unknown"/>
        <end position="113"/>
    </location>
</feature>
<feature type="chain" id="PRO_5000144817" description="Violaxanthin de-epoxidase, chloroplastic">
    <location>
        <begin position="114"/>
        <end position="462"/>
    </location>
</feature>
<feature type="region of interest" description="Involved in the binding to the thylakoid membrane">
    <location>
        <begin position="380"/>
        <end position="391"/>
    </location>
</feature>
<feature type="coiled-coil region" evidence="1">
    <location>
        <begin position="372"/>
        <end position="437"/>
    </location>
</feature>
<feature type="disulfide bond" evidence="16 17">
    <location>
        <begin position="231"/>
        <end position="362"/>
    </location>
</feature>
<feature type="mutagenesis site" description="In npq1-1; loss of activity." evidence="10">
    <original>C</original>
    <variation>Y</variation>
    <location>
        <position position="185"/>
    </location>
</feature>
<feature type="helix" evidence="18">
    <location>
        <begin position="200"/>
        <end position="202"/>
    </location>
</feature>
<feature type="helix" evidence="18">
    <location>
        <begin position="209"/>
        <end position="212"/>
    </location>
</feature>
<feature type="strand" evidence="18">
    <location>
        <begin position="214"/>
        <end position="222"/>
    </location>
</feature>
<feature type="turn" evidence="18">
    <location>
        <begin position="224"/>
        <end position="226"/>
    </location>
</feature>
<feature type="strand" evidence="18">
    <location>
        <begin position="233"/>
        <end position="239"/>
    </location>
</feature>
<feature type="turn" evidence="18">
    <location>
        <begin position="240"/>
        <end position="242"/>
    </location>
</feature>
<feature type="strand" evidence="18">
    <location>
        <begin position="243"/>
        <end position="253"/>
    </location>
</feature>
<feature type="strand" evidence="18">
    <location>
        <begin position="259"/>
        <end position="270"/>
    </location>
</feature>
<feature type="strand" evidence="18">
    <location>
        <begin position="277"/>
        <end position="280"/>
    </location>
</feature>
<feature type="helix" evidence="19">
    <location>
        <begin position="284"/>
        <end position="286"/>
    </location>
</feature>
<feature type="strand" evidence="18">
    <location>
        <begin position="291"/>
        <end position="298"/>
    </location>
</feature>
<feature type="strand" evidence="18">
    <location>
        <begin position="300"/>
        <end position="302"/>
    </location>
</feature>
<feature type="strand" evidence="18">
    <location>
        <begin position="306"/>
        <end position="316"/>
    </location>
</feature>
<feature type="strand" evidence="18">
    <location>
        <begin position="319"/>
        <end position="332"/>
    </location>
</feature>
<feature type="helix" evidence="18">
    <location>
        <begin position="335"/>
        <end position="337"/>
    </location>
</feature>
<feature type="helix" evidence="18">
    <location>
        <begin position="338"/>
        <end position="347"/>
    </location>
</feature>
<feature type="helix" evidence="18">
    <location>
        <begin position="352"/>
        <end position="354"/>
    </location>
</feature>
<feature type="strand" evidence="18">
    <location>
        <begin position="355"/>
        <end position="357"/>
    </location>
</feature>
<evidence type="ECO:0000255" key="1"/>
<evidence type="ECO:0000269" key="2">
    <source>
    </source>
</evidence>
<evidence type="ECO:0000269" key="3">
    <source>
    </source>
</evidence>
<evidence type="ECO:0000269" key="4">
    <source>
    </source>
</evidence>
<evidence type="ECO:0000269" key="5">
    <source>
    </source>
</evidence>
<evidence type="ECO:0000269" key="6">
    <source>
    </source>
</evidence>
<evidence type="ECO:0000269" key="7">
    <source>
    </source>
</evidence>
<evidence type="ECO:0000269" key="8">
    <source>
    </source>
</evidence>
<evidence type="ECO:0000269" key="9">
    <source>
    </source>
</evidence>
<evidence type="ECO:0000269" key="10">
    <source>
    </source>
</evidence>
<evidence type="ECO:0000303" key="11">
    <source>
    </source>
</evidence>
<evidence type="ECO:0000305" key="12"/>
<evidence type="ECO:0000312" key="13">
    <source>
        <dbReference type="Araport" id="AT1G08550"/>
    </source>
</evidence>
<evidence type="ECO:0000312" key="14">
    <source>
        <dbReference type="EMBL" id="AAF22898.1"/>
    </source>
</evidence>
<evidence type="ECO:0000312" key="15">
    <source>
        <dbReference type="EMBL" id="AAF99753.1"/>
    </source>
</evidence>
<evidence type="ECO:0007744" key="16">
    <source>
        <dbReference type="PDB" id="3CQN"/>
    </source>
</evidence>
<evidence type="ECO:0007744" key="17">
    <source>
        <dbReference type="PDB" id="3CQR"/>
    </source>
</evidence>
<evidence type="ECO:0007829" key="18">
    <source>
        <dbReference type="PDB" id="3CQN"/>
    </source>
</evidence>
<evidence type="ECO:0007829" key="19">
    <source>
        <dbReference type="PDB" id="3CQR"/>
    </source>
</evidence>
<accession>Q39249</accession>
<accession>Q9SJD9</accession>